<keyword id="KW-0025">Alternative splicing</keyword>
<keyword id="KW-0238">DNA-binding</keyword>
<keyword id="KW-0488">Methylation</keyword>
<keyword id="KW-0539">Nucleus</keyword>
<keyword id="KW-1267">Proteomics identification</keyword>
<keyword id="KW-1185">Reference proteome</keyword>
<keyword id="KW-0677">Repeat</keyword>
<keyword id="KW-0804">Transcription</keyword>
<keyword id="KW-0805">Transcription regulation</keyword>
<feature type="chain" id="PRO_0000127122" description="Aryl hydrocarbon receptor nuclear translocator 2">
    <location>
        <begin position="1"/>
        <end position="717"/>
    </location>
</feature>
<feature type="domain" description="bHLH" evidence="3">
    <location>
        <begin position="63"/>
        <end position="116"/>
    </location>
</feature>
<feature type="domain" description="PAS 1" evidence="2">
    <location>
        <begin position="134"/>
        <end position="209"/>
    </location>
</feature>
<feature type="domain" description="PAS 2" evidence="2">
    <location>
        <begin position="323"/>
        <end position="393"/>
    </location>
</feature>
<feature type="domain" description="PAC">
    <location>
        <begin position="398"/>
        <end position="441"/>
    </location>
</feature>
<feature type="region of interest" description="Disordered" evidence="4">
    <location>
        <begin position="1"/>
        <end position="20"/>
    </location>
</feature>
<feature type="region of interest" description="Disordered" evidence="4">
    <location>
        <begin position="35"/>
        <end position="74"/>
    </location>
</feature>
<feature type="region of interest" description="Disordered" evidence="4">
    <location>
        <begin position="548"/>
        <end position="717"/>
    </location>
</feature>
<feature type="compositionally biased region" description="Basic and acidic residues" evidence="4">
    <location>
        <begin position="63"/>
        <end position="73"/>
    </location>
</feature>
<feature type="compositionally biased region" description="Polar residues" evidence="4">
    <location>
        <begin position="549"/>
        <end position="574"/>
    </location>
</feature>
<feature type="compositionally biased region" description="Polar residues" evidence="4">
    <location>
        <begin position="585"/>
        <end position="605"/>
    </location>
</feature>
<feature type="compositionally biased region" description="Low complexity" evidence="4">
    <location>
        <begin position="610"/>
        <end position="625"/>
    </location>
</feature>
<feature type="compositionally biased region" description="Polar residues" evidence="4">
    <location>
        <begin position="642"/>
        <end position="651"/>
    </location>
</feature>
<feature type="compositionally biased region" description="Low complexity" evidence="4">
    <location>
        <begin position="658"/>
        <end position="680"/>
    </location>
</feature>
<feature type="modified residue" description="Omega-N-methylarginine" evidence="1">
    <location>
        <position position="42"/>
    </location>
</feature>
<feature type="splice variant" id="VSP_022687" description="In isoform 2." evidence="8 9">
    <location>
        <begin position="1"/>
        <end position="11"/>
    </location>
</feature>
<feature type="sequence variant" id="VAR_076841" description="Decreased transcription factor activity due to impaired localization to the nucleus; dbSNP:rs140468271." evidence="6">
    <original>R</original>
    <variation>W</variation>
    <location>
        <position position="46"/>
    </location>
</feature>
<feature type="sequence variant" id="VAR_076842" description="Decreased transcription factor activity; dbSNP:rs371290912." evidence="6">
    <original>R</original>
    <variation>H</variation>
    <location>
        <position position="107"/>
    </location>
</feature>
<feature type="sequence variant" id="VAR_076843" description="Does not affect the transcription factor activity; dbSNP:rs141193900." evidence="6">
    <original>R</original>
    <variation>Q</variation>
    <location>
        <position position="402"/>
    </location>
</feature>
<feature type="sequence variant" id="VAR_076844" description="Does not affect the transcription factor activity; dbSNP:rs150964641." evidence="6">
    <original>W</original>
    <variation>R</variation>
    <location>
        <position position="410"/>
    </location>
</feature>
<feature type="sequence variant" id="VAR_049538" description="In dbSNP:rs4072568." evidence="7">
    <original>G</original>
    <variation>S</variation>
    <location>
        <position position="679"/>
    </location>
</feature>
<feature type="sequence conflict" description="In Ref. 4; BX647212." evidence="10" ref="4">
    <original>A</original>
    <variation>V</variation>
    <location>
        <position position="28"/>
    </location>
</feature>
<feature type="sequence conflict" description="In Ref. 2; BAA20766." evidence="10" ref="2">
    <original>R</original>
    <variation>K</variation>
    <location>
        <position position="75"/>
    </location>
</feature>
<feature type="sequence conflict" description="In Ref. 4; BX647212." evidence="10" ref="4">
    <original>S</original>
    <variation>P</variation>
    <location>
        <position position="555"/>
    </location>
</feature>
<reference key="1">
    <citation type="journal article" date="2002" name="Teratology">
        <title>Aryl hydrocarbon receptor nuclear translocator 2 (ARNT2): structure, gene mapping, polymorphisms, and candidate evaluation for human orofacial clefts.</title>
        <authorList>
            <person name="Barrow L.L."/>
            <person name="Wines M.E."/>
            <person name="Romitti P.A."/>
            <person name="Holdener B.C."/>
            <person name="Murray J.C."/>
        </authorList>
    </citation>
    <scope>NUCLEOTIDE SEQUENCE [GENOMIC DNA]</scope>
</reference>
<reference key="2">
    <citation type="journal article" date="1997" name="DNA Res.">
        <title>Prediction of the coding sequences of unidentified human genes. VII. The complete sequences of 100 new cDNA clones from brain which can code for large proteins in vitro.</title>
        <authorList>
            <person name="Nagase T."/>
            <person name="Ishikawa K."/>
            <person name="Nakajima D."/>
            <person name="Ohira M."/>
            <person name="Seki N."/>
            <person name="Miyajima N."/>
            <person name="Tanaka A."/>
            <person name="Kotani H."/>
            <person name="Nomura N."/>
            <person name="Ohara O."/>
        </authorList>
    </citation>
    <scope>NUCLEOTIDE SEQUENCE [LARGE SCALE MRNA] (ISOFORM 2)</scope>
    <scope>VARIANT SER-679</scope>
    <source>
        <tissue>Brain</tissue>
    </source>
</reference>
<reference key="3">
    <citation type="journal article" date="2004" name="Nat. Genet.">
        <title>Complete sequencing and characterization of 21,243 full-length human cDNAs.</title>
        <authorList>
            <person name="Ota T."/>
            <person name="Suzuki Y."/>
            <person name="Nishikawa T."/>
            <person name="Otsuki T."/>
            <person name="Sugiyama T."/>
            <person name="Irie R."/>
            <person name="Wakamatsu A."/>
            <person name="Hayashi K."/>
            <person name="Sato H."/>
            <person name="Nagai K."/>
            <person name="Kimura K."/>
            <person name="Makita H."/>
            <person name="Sekine M."/>
            <person name="Obayashi M."/>
            <person name="Nishi T."/>
            <person name="Shibahara T."/>
            <person name="Tanaka T."/>
            <person name="Ishii S."/>
            <person name="Yamamoto J."/>
            <person name="Saito K."/>
            <person name="Kawai Y."/>
            <person name="Isono Y."/>
            <person name="Nakamura Y."/>
            <person name="Nagahari K."/>
            <person name="Murakami K."/>
            <person name="Yasuda T."/>
            <person name="Iwayanagi T."/>
            <person name="Wagatsuma M."/>
            <person name="Shiratori A."/>
            <person name="Sudo H."/>
            <person name="Hosoiri T."/>
            <person name="Kaku Y."/>
            <person name="Kodaira H."/>
            <person name="Kondo H."/>
            <person name="Sugawara M."/>
            <person name="Takahashi M."/>
            <person name="Kanda K."/>
            <person name="Yokoi T."/>
            <person name="Furuya T."/>
            <person name="Kikkawa E."/>
            <person name="Omura Y."/>
            <person name="Abe K."/>
            <person name="Kamihara K."/>
            <person name="Katsuta N."/>
            <person name="Sato K."/>
            <person name="Tanikawa M."/>
            <person name="Yamazaki M."/>
            <person name="Ninomiya K."/>
            <person name="Ishibashi T."/>
            <person name="Yamashita H."/>
            <person name="Murakawa K."/>
            <person name="Fujimori K."/>
            <person name="Tanai H."/>
            <person name="Kimata M."/>
            <person name="Watanabe M."/>
            <person name="Hiraoka S."/>
            <person name="Chiba Y."/>
            <person name="Ishida S."/>
            <person name="Ono Y."/>
            <person name="Takiguchi S."/>
            <person name="Watanabe S."/>
            <person name="Yosida M."/>
            <person name="Hotuta T."/>
            <person name="Kusano J."/>
            <person name="Kanehori K."/>
            <person name="Takahashi-Fujii A."/>
            <person name="Hara H."/>
            <person name="Tanase T.-O."/>
            <person name="Nomura Y."/>
            <person name="Togiya S."/>
            <person name="Komai F."/>
            <person name="Hara R."/>
            <person name="Takeuchi K."/>
            <person name="Arita M."/>
            <person name="Imose N."/>
            <person name="Musashino K."/>
            <person name="Yuuki H."/>
            <person name="Oshima A."/>
            <person name="Sasaki N."/>
            <person name="Aotsuka S."/>
            <person name="Yoshikawa Y."/>
            <person name="Matsunawa H."/>
            <person name="Ichihara T."/>
            <person name="Shiohata N."/>
            <person name="Sano S."/>
            <person name="Moriya S."/>
            <person name="Momiyama H."/>
            <person name="Satoh N."/>
            <person name="Takami S."/>
            <person name="Terashima Y."/>
            <person name="Suzuki O."/>
            <person name="Nakagawa S."/>
            <person name="Senoh A."/>
            <person name="Mizoguchi H."/>
            <person name="Goto Y."/>
            <person name="Shimizu F."/>
            <person name="Wakebe H."/>
            <person name="Hishigaki H."/>
            <person name="Watanabe T."/>
            <person name="Sugiyama A."/>
            <person name="Takemoto M."/>
            <person name="Kawakami B."/>
            <person name="Yamazaki M."/>
            <person name="Watanabe K."/>
            <person name="Kumagai A."/>
            <person name="Itakura S."/>
            <person name="Fukuzumi Y."/>
            <person name="Fujimori Y."/>
            <person name="Komiyama M."/>
            <person name="Tashiro H."/>
            <person name="Tanigami A."/>
            <person name="Fujiwara T."/>
            <person name="Ono T."/>
            <person name="Yamada K."/>
            <person name="Fujii Y."/>
            <person name="Ozaki K."/>
            <person name="Hirao M."/>
            <person name="Ohmori Y."/>
            <person name="Kawabata A."/>
            <person name="Hikiji T."/>
            <person name="Kobatake N."/>
            <person name="Inagaki H."/>
            <person name="Ikema Y."/>
            <person name="Okamoto S."/>
            <person name="Okitani R."/>
            <person name="Kawakami T."/>
            <person name="Noguchi S."/>
            <person name="Itoh T."/>
            <person name="Shigeta K."/>
            <person name="Senba T."/>
            <person name="Matsumura K."/>
            <person name="Nakajima Y."/>
            <person name="Mizuno T."/>
            <person name="Morinaga M."/>
            <person name="Sasaki M."/>
            <person name="Togashi T."/>
            <person name="Oyama M."/>
            <person name="Hata H."/>
            <person name="Watanabe M."/>
            <person name="Komatsu T."/>
            <person name="Mizushima-Sugano J."/>
            <person name="Satoh T."/>
            <person name="Shirai Y."/>
            <person name="Takahashi Y."/>
            <person name="Nakagawa K."/>
            <person name="Okumura K."/>
            <person name="Nagase T."/>
            <person name="Nomura N."/>
            <person name="Kikuchi H."/>
            <person name="Masuho Y."/>
            <person name="Yamashita R."/>
            <person name="Nakai K."/>
            <person name="Yada T."/>
            <person name="Nakamura Y."/>
            <person name="Ohara O."/>
            <person name="Isogai T."/>
            <person name="Sugano S."/>
        </authorList>
    </citation>
    <scope>NUCLEOTIDE SEQUENCE [LARGE SCALE MRNA] (ISOFORM 2)</scope>
    <source>
        <tissue>Hippocampus</tissue>
    </source>
</reference>
<reference key="4">
    <citation type="journal article" date="2007" name="BMC Genomics">
        <title>The full-ORF clone resource of the German cDNA consortium.</title>
        <authorList>
            <person name="Bechtel S."/>
            <person name="Rosenfelder H."/>
            <person name="Duda A."/>
            <person name="Schmidt C.P."/>
            <person name="Ernst U."/>
            <person name="Wellenreuther R."/>
            <person name="Mehrle A."/>
            <person name="Schuster C."/>
            <person name="Bahr A."/>
            <person name="Bloecker H."/>
            <person name="Heubner D."/>
            <person name="Hoerlein A."/>
            <person name="Michel G."/>
            <person name="Wedler H."/>
            <person name="Koehrer K."/>
            <person name="Ottenwaelder B."/>
            <person name="Poustka A."/>
            <person name="Wiemann S."/>
            <person name="Schupp I."/>
        </authorList>
    </citation>
    <scope>NUCLEOTIDE SEQUENCE [LARGE SCALE MRNA] (ISOFORM 1)</scope>
    <source>
        <tissue>Amygdala</tissue>
    </source>
</reference>
<reference key="5">
    <citation type="submission" date="2005-09" db="EMBL/GenBank/DDBJ databases">
        <authorList>
            <person name="Mural R.J."/>
            <person name="Istrail S."/>
            <person name="Sutton G.G."/>
            <person name="Florea L."/>
            <person name="Halpern A.L."/>
            <person name="Mobarry C.M."/>
            <person name="Lippert R."/>
            <person name="Walenz B."/>
            <person name="Shatkay H."/>
            <person name="Dew I."/>
            <person name="Miller J.R."/>
            <person name="Flanigan M.J."/>
            <person name="Edwards N.J."/>
            <person name="Bolanos R."/>
            <person name="Fasulo D."/>
            <person name="Halldorsson B.V."/>
            <person name="Hannenhalli S."/>
            <person name="Turner R."/>
            <person name="Yooseph S."/>
            <person name="Lu F."/>
            <person name="Nusskern D.R."/>
            <person name="Shue B.C."/>
            <person name="Zheng X.H."/>
            <person name="Zhong F."/>
            <person name="Delcher A.L."/>
            <person name="Huson D.H."/>
            <person name="Kravitz S.A."/>
            <person name="Mouchard L."/>
            <person name="Reinert K."/>
            <person name="Remington K.A."/>
            <person name="Clark A.G."/>
            <person name="Waterman M.S."/>
            <person name="Eichler E.E."/>
            <person name="Adams M.D."/>
            <person name="Hunkapiller M.W."/>
            <person name="Myers E.W."/>
            <person name="Venter J.C."/>
        </authorList>
    </citation>
    <scope>NUCLEOTIDE SEQUENCE [LARGE SCALE GENOMIC DNA]</scope>
</reference>
<reference key="6">
    <citation type="journal article" date="2004" name="Genome Res.">
        <title>The status, quality, and expansion of the NIH full-length cDNA project: the Mammalian Gene Collection (MGC).</title>
        <authorList>
            <consortium name="The MGC Project Team"/>
        </authorList>
    </citation>
    <scope>NUCLEOTIDE SEQUENCE [LARGE SCALE MRNA] OF 1-694 (ISOFORM 1)</scope>
    <source>
        <tissue>Brain</tissue>
    </source>
</reference>
<reference key="7">
    <citation type="journal article" date="2008" name="Proc. Natl. Acad. Sci. U.S.A.">
        <title>A quantitative atlas of mitotic phosphorylation.</title>
        <authorList>
            <person name="Dephoure N."/>
            <person name="Zhou C."/>
            <person name="Villen J."/>
            <person name="Beausoleil S.A."/>
            <person name="Bakalarski C.E."/>
            <person name="Elledge S.J."/>
            <person name="Gygi S.P."/>
        </authorList>
    </citation>
    <scope>IDENTIFICATION BY MASS SPECTROMETRY [LARGE SCALE ANALYSIS]</scope>
    <source>
        <tissue>Cervix carcinoma</tissue>
    </source>
</reference>
<reference key="8">
    <citation type="journal article" date="2013" name="Brain">
        <title>ARNT2 mutation causes hypopituitarism, post-natal microcephaly, visual and renal anomalies.</title>
        <authorList>
            <person name="Webb E.A."/>
            <person name="AlMutair A."/>
            <person name="Kelberman D."/>
            <person name="Bacchelli C."/>
            <person name="Chanudet E."/>
            <person name="Lescai F."/>
            <person name="Andoniadou C.L."/>
            <person name="Banyan A."/>
            <person name="Alsawaid A."/>
            <person name="Alrifai M.T."/>
            <person name="Alahmesh M.A."/>
            <person name="Balwi M."/>
            <person name="Mousavy-Gharavy S.N."/>
            <person name="Lukovic B."/>
            <person name="Burke D."/>
            <person name="McCabe M.J."/>
            <person name="Kasia T."/>
            <person name="Kleta R."/>
            <person name="Stupka E."/>
            <person name="Beales P.L."/>
            <person name="Thompson D.A."/>
            <person name="Chong W.K."/>
            <person name="Alkuraya F.S."/>
            <person name="Martinez-Barbera J.P."/>
            <person name="Sowden J.C."/>
            <person name="Dattani M.T."/>
        </authorList>
    </citation>
    <scope>FUNCTION</scope>
    <scope>INVOLVEMENT IN WEDAS</scope>
</reference>
<reference key="9">
    <citation type="journal article" date="2014" name="PLoS ONE">
        <title>Human variants in the neuronal basic helix-loop-helix/Per-Arnt-Sim (bHLH/PAS) transcription factor complex NPAS4/ARNT2 disrupt function.</title>
        <authorList>
            <person name="Bersten D.C."/>
            <person name="Bruning J.B."/>
            <person name="Peet D.J."/>
            <person name="Whitelaw M.L."/>
        </authorList>
    </citation>
    <scope>VARIANTS TRP-46; HIS-107; GLN-402 AND ARG-410</scope>
    <scope>CHARACTERIZATION OF VARIANTS TRP-46; HIS-107; GLN-402 AND ARG-410</scope>
    <scope>SUBCELLULAR LOCATION</scope>
    <scope>SUBUNIT</scope>
</reference>
<accession>Q9HBZ2</accession>
<accession>B4DIS7</accession>
<accession>O15024</accession>
<accession>Q8IYC2</accession>
<dbReference type="EMBL" id="AF185610">
    <property type="protein sequence ID" value="AAG15310.1"/>
    <property type="molecule type" value="Genomic_DNA"/>
</dbReference>
<dbReference type="EMBL" id="AF185593">
    <property type="protein sequence ID" value="AAG15310.1"/>
    <property type="status" value="JOINED"/>
    <property type="molecule type" value="Genomic_DNA"/>
</dbReference>
<dbReference type="EMBL" id="AF185594">
    <property type="protein sequence ID" value="AAG15310.1"/>
    <property type="status" value="JOINED"/>
    <property type="molecule type" value="Genomic_DNA"/>
</dbReference>
<dbReference type="EMBL" id="AF185595">
    <property type="protein sequence ID" value="AAG15310.1"/>
    <property type="status" value="JOINED"/>
    <property type="molecule type" value="Genomic_DNA"/>
</dbReference>
<dbReference type="EMBL" id="AF185596">
    <property type="protein sequence ID" value="AAG15310.1"/>
    <property type="status" value="JOINED"/>
    <property type="molecule type" value="Genomic_DNA"/>
</dbReference>
<dbReference type="EMBL" id="AF185597">
    <property type="protein sequence ID" value="AAG15310.1"/>
    <property type="status" value="JOINED"/>
    <property type="molecule type" value="Genomic_DNA"/>
</dbReference>
<dbReference type="EMBL" id="AF185598">
    <property type="protein sequence ID" value="AAG15310.1"/>
    <property type="status" value="JOINED"/>
    <property type="molecule type" value="Genomic_DNA"/>
</dbReference>
<dbReference type="EMBL" id="AF185599">
    <property type="protein sequence ID" value="AAG15310.1"/>
    <property type="status" value="JOINED"/>
    <property type="molecule type" value="Genomic_DNA"/>
</dbReference>
<dbReference type="EMBL" id="AF185600">
    <property type="protein sequence ID" value="AAG15310.1"/>
    <property type="status" value="JOINED"/>
    <property type="molecule type" value="Genomic_DNA"/>
</dbReference>
<dbReference type="EMBL" id="AF185601">
    <property type="protein sequence ID" value="AAG15310.1"/>
    <property type="status" value="JOINED"/>
    <property type="molecule type" value="Genomic_DNA"/>
</dbReference>
<dbReference type="EMBL" id="AF185602">
    <property type="protein sequence ID" value="AAG15310.1"/>
    <property type="status" value="JOINED"/>
    <property type="molecule type" value="Genomic_DNA"/>
</dbReference>
<dbReference type="EMBL" id="AF185603">
    <property type="protein sequence ID" value="AAG15310.1"/>
    <property type="status" value="JOINED"/>
    <property type="molecule type" value="Genomic_DNA"/>
</dbReference>
<dbReference type="EMBL" id="AF185604">
    <property type="protein sequence ID" value="AAG15310.1"/>
    <property type="status" value="JOINED"/>
    <property type="molecule type" value="Genomic_DNA"/>
</dbReference>
<dbReference type="EMBL" id="AF185605">
    <property type="protein sequence ID" value="AAG15310.1"/>
    <property type="status" value="JOINED"/>
    <property type="molecule type" value="Genomic_DNA"/>
</dbReference>
<dbReference type="EMBL" id="AF185606">
    <property type="protein sequence ID" value="AAG15310.1"/>
    <property type="status" value="JOINED"/>
    <property type="molecule type" value="Genomic_DNA"/>
</dbReference>
<dbReference type="EMBL" id="AF185607">
    <property type="protein sequence ID" value="AAG15310.1"/>
    <property type="status" value="JOINED"/>
    <property type="molecule type" value="Genomic_DNA"/>
</dbReference>
<dbReference type="EMBL" id="AF185608">
    <property type="protein sequence ID" value="AAG15310.1"/>
    <property type="status" value="JOINED"/>
    <property type="molecule type" value="Genomic_DNA"/>
</dbReference>
<dbReference type="EMBL" id="AF185609">
    <property type="protein sequence ID" value="AAG15310.1"/>
    <property type="status" value="JOINED"/>
    <property type="molecule type" value="Genomic_DNA"/>
</dbReference>
<dbReference type="EMBL" id="AB002305">
    <property type="protein sequence ID" value="BAA20766.2"/>
    <property type="status" value="ALT_INIT"/>
    <property type="molecule type" value="mRNA"/>
</dbReference>
<dbReference type="EMBL" id="AK295763">
    <property type="protein sequence ID" value="BAG58589.1"/>
    <property type="molecule type" value="mRNA"/>
</dbReference>
<dbReference type="EMBL" id="BX647212">
    <property type="status" value="NOT_ANNOTATED_CDS"/>
    <property type="molecule type" value="mRNA"/>
</dbReference>
<dbReference type="EMBL" id="CH471136">
    <property type="protein sequence ID" value="EAW99114.1"/>
    <property type="molecule type" value="Genomic_DNA"/>
</dbReference>
<dbReference type="EMBL" id="BC036099">
    <property type="protein sequence ID" value="AAH36099.1"/>
    <property type="status" value="ALT_SEQ"/>
    <property type="molecule type" value="mRNA"/>
</dbReference>
<dbReference type="CCDS" id="CCDS32307.1">
    <molecule id="Q9HBZ2-1"/>
</dbReference>
<dbReference type="RefSeq" id="NP_055677.3">
    <molecule id="Q9HBZ2-1"/>
    <property type="nucleotide sequence ID" value="NM_014862.3"/>
</dbReference>
<dbReference type="SMR" id="Q9HBZ2"/>
<dbReference type="BioGRID" id="115244">
    <property type="interactions" value="86"/>
</dbReference>
<dbReference type="FunCoup" id="Q9HBZ2">
    <property type="interactions" value="1137"/>
</dbReference>
<dbReference type="IntAct" id="Q9HBZ2">
    <property type="interactions" value="74"/>
</dbReference>
<dbReference type="STRING" id="9606.ENSP00000307479"/>
<dbReference type="GlyGen" id="Q9HBZ2">
    <property type="glycosylation" value="1 site, 1 O-linked glycan (1 site)"/>
</dbReference>
<dbReference type="iPTMnet" id="Q9HBZ2"/>
<dbReference type="PhosphoSitePlus" id="Q9HBZ2"/>
<dbReference type="BioMuta" id="ARNT2"/>
<dbReference type="DMDM" id="125987793"/>
<dbReference type="jPOST" id="Q9HBZ2"/>
<dbReference type="MassIVE" id="Q9HBZ2"/>
<dbReference type="PaxDb" id="9606-ENSP00000307479"/>
<dbReference type="PeptideAtlas" id="Q9HBZ2"/>
<dbReference type="ProteomicsDB" id="81615">
    <molecule id="Q9HBZ2-1"/>
</dbReference>
<dbReference type="ProteomicsDB" id="81616">
    <molecule id="Q9HBZ2-2"/>
</dbReference>
<dbReference type="Antibodypedia" id="3911">
    <property type="antibodies" value="291 antibodies from 32 providers"/>
</dbReference>
<dbReference type="DNASU" id="9915"/>
<dbReference type="Ensembl" id="ENST00000303329.9">
    <molecule id="Q9HBZ2-1"/>
    <property type="protein sequence ID" value="ENSP00000307479.4"/>
    <property type="gene ID" value="ENSG00000172379.22"/>
</dbReference>
<dbReference type="Ensembl" id="ENST00000527771.5">
    <molecule id="Q9HBZ2-2"/>
    <property type="protein sequence ID" value="ENSP00000453792.1"/>
    <property type="gene ID" value="ENSG00000172379.22"/>
</dbReference>
<dbReference type="Ensembl" id="ENST00000533983.5">
    <molecule id="Q9HBZ2-2"/>
    <property type="protein sequence ID" value="ENSP00000453651.1"/>
    <property type="gene ID" value="ENSG00000172379.22"/>
</dbReference>
<dbReference type="GeneID" id="9915"/>
<dbReference type="KEGG" id="hsa:9915"/>
<dbReference type="MANE-Select" id="ENST00000303329.9">
    <property type="protein sequence ID" value="ENSP00000307479.4"/>
    <property type="RefSeq nucleotide sequence ID" value="NM_014862.4"/>
    <property type="RefSeq protein sequence ID" value="NP_055677.3"/>
</dbReference>
<dbReference type="UCSC" id="uc010unm.3">
    <molecule id="Q9HBZ2-1"/>
    <property type="organism name" value="human"/>
</dbReference>
<dbReference type="AGR" id="HGNC:16876"/>
<dbReference type="CTD" id="9915"/>
<dbReference type="DisGeNET" id="9915"/>
<dbReference type="GeneCards" id="ARNT2"/>
<dbReference type="HGNC" id="HGNC:16876">
    <property type="gene designation" value="ARNT2"/>
</dbReference>
<dbReference type="HPA" id="ENSG00000172379">
    <property type="expression patterns" value="Tissue enriched (brain)"/>
</dbReference>
<dbReference type="MalaCards" id="ARNT2"/>
<dbReference type="MIM" id="606036">
    <property type="type" value="gene"/>
</dbReference>
<dbReference type="MIM" id="615926">
    <property type="type" value="phenotype"/>
</dbReference>
<dbReference type="neXtProt" id="NX_Q9HBZ2"/>
<dbReference type="OpenTargets" id="ENSG00000172379"/>
<dbReference type="Orphanet" id="3157">
    <property type="disease" value="Septo-optic dysplasia spectrum"/>
</dbReference>
<dbReference type="PharmGKB" id="PA24995"/>
<dbReference type="VEuPathDB" id="HostDB:ENSG00000172379"/>
<dbReference type="eggNOG" id="KOG3561">
    <property type="taxonomic scope" value="Eukaryota"/>
</dbReference>
<dbReference type="GeneTree" id="ENSGT00940000158198"/>
<dbReference type="InParanoid" id="Q9HBZ2"/>
<dbReference type="OMA" id="RVRKDCY"/>
<dbReference type="OrthoDB" id="9527095at2759"/>
<dbReference type="PAN-GO" id="Q9HBZ2">
    <property type="GO annotations" value="5 GO annotations based on evolutionary models"/>
</dbReference>
<dbReference type="PhylomeDB" id="Q9HBZ2"/>
<dbReference type="TreeFam" id="TF319983"/>
<dbReference type="PathwayCommons" id="Q9HBZ2"/>
<dbReference type="Reactome" id="R-HSA-1989781">
    <property type="pathway name" value="PPARA activates gene expression"/>
</dbReference>
<dbReference type="Reactome" id="R-HSA-211945">
    <property type="pathway name" value="Phase I - Functionalization of compounds"/>
</dbReference>
<dbReference type="Reactome" id="R-HSA-211976">
    <property type="pathway name" value="Endogenous sterols"/>
</dbReference>
<dbReference type="Reactome" id="R-HSA-211981">
    <property type="pathway name" value="Xenobiotics"/>
</dbReference>
<dbReference type="Reactome" id="R-HSA-8937144">
    <property type="pathway name" value="Aryl hydrocarbon receptor signalling"/>
</dbReference>
<dbReference type="Reactome" id="R-HSA-9768919">
    <property type="pathway name" value="NPAS4 regulates expression of target genes"/>
</dbReference>
<dbReference type="SignaLink" id="Q9HBZ2"/>
<dbReference type="BioGRID-ORCS" id="9915">
    <property type="hits" value="18 hits in 1173 CRISPR screens"/>
</dbReference>
<dbReference type="ChiTaRS" id="ARNT2">
    <property type="organism name" value="human"/>
</dbReference>
<dbReference type="GeneWiki" id="ARNT2"/>
<dbReference type="GenomeRNAi" id="9915"/>
<dbReference type="Pharos" id="Q9HBZ2">
    <property type="development level" value="Tbio"/>
</dbReference>
<dbReference type="PRO" id="PR:Q9HBZ2"/>
<dbReference type="Proteomes" id="UP000005640">
    <property type="component" value="Chromosome 15"/>
</dbReference>
<dbReference type="RNAct" id="Q9HBZ2">
    <property type="molecule type" value="protein"/>
</dbReference>
<dbReference type="Bgee" id="ENSG00000172379">
    <property type="expression patterns" value="Expressed in lateral globus pallidus and 168 other cell types or tissues"/>
</dbReference>
<dbReference type="ExpressionAtlas" id="Q9HBZ2">
    <property type="expression patterns" value="baseline and differential"/>
</dbReference>
<dbReference type="GO" id="GO:0034751">
    <property type="term" value="C:aryl hydrocarbon receptor complex"/>
    <property type="evidence" value="ECO:0000318"/>
    <property type="project" value="GO_Central"/>
</dbReference>
<dbReference type="GO" id="GO:0000785">
    <property type="term" value="C:chromatin"/>
    <property type="evidence" value="ECO:0000247"/>
    <property type="project" value="NTNU_SB"/>
</dbReference>
<dbReference type="GO" id="GO:0005737">
    <property type="term" value="C:cytoplasm"/>
    <property type="evidence" value="ECO:0007669"/>
    <property type="project" value="InterPro"/>
</dbReference>
<dbReference type="GO" id="GO:0005654">
    <property type="term" value="C:nucleoplasm"/>
    <property type="evidence" value="ECO:0000314"/>
    <property type="project" value="HPA"/>
</dbReference>
<dbReference type="GO" id="GO:0005634">
    <property type="term" value="C:nucleus"/>
    <property type="evidence" value="ECO:0000314"/>
    <property type="project" value="UniProtKB"/>
</dbReference>
<dbReference type="GO" id="GO:0005667">
    <property type="term" value="C:transcription regulator complex"/>
    <property type="evidence" value="ECO:0007669"/>
    <property type="project" value="Ensembl"/>
</dbReference>
<dbReference type="GO" id="GO:0017162">
    <property type="term" value="F:aryl hydrocarbon receptor binding"/>
    <property type="evidence" value="ECO:0000250"/>
    <property type="project" value="UniProtKB"/>
</dbReference>
<dbReference type="GO" id="GO:0001228">
    <property type="term" value="F:DNA-binding transcription activator activity, RNA polymerase II-specific"/>
    <property type="evidence" value="ECO:0007669"/>
    <property type="project" value="Ensembl"/>
</dbReference>
<dbReference type="GO" id="GO:0003700">
    <property type="term" value="F:DNA-binding transcription factor activity"/>
    <property type="evidence" value="ECO:0000250"/>
    <property type="project" value="UniProtKB"/>
</dbReference>
<dbReference type="GO" id="GO:0000981">
    <property type="term" value="F:DNA-binding transcription factor activity, RNA polymerase II-specific"/>
    <property type="evidence" value="ECO:0000314"/>
    <property type="project" value="UniProtKB"/>
</dbReference>
<dbReference type="GO" id="GO:0046982">
    <property type="term" value="F:protein heterodimerization activity"/>
    <property type="evidence" value="ECO:0000314"/>
    <property type="project" value="UniProtKB"/>
</dbReference>
<dbReference type="GO" id="GO:0044877">
    <property type="term" value="F:protein-containing complex binding"/>
    <property type="evidence" value="ECO:0007669"/>
    <property type="project" value="Ensembl"/>
</dbReference>
<dbReference type="GO" id="GO:0000978">
    <property type="term" value="F:RNA polymerase II cis-regulatory region sequence-specific DNA binding"/>
    <property type="evidence" value="ECO:0000318"/>
    <property type="project" value="GO_Central"/>
</dbReference>
<dbReference type="GO" id="GO:1990837">
    <property type="term" value="F:sequence-specific double-stranded DNA binding"/>
    <property type="evidence" value="ECO:0000314"/>
    <property type="project" value="ARUK-UCL"/>
</dbReference>
<dbReference type="GO" id="GO:0007420">
    <property type="term" value="P:brain development"/>
    <property type="evidence" value="ECO:0000315"/>
    <property type="project" value="UniProtKB"/>
</dbReference>
<dbReference type="GO" id="GO:0007417">
    <property type="term" value="P:central nervous system development"/>
    <property type="evidence" value="ECO:0000250"/>
    <property type="project" value="UniProtKB"/>
</dbReference>
<dbReference type="GO" id="GO:0001701">
    <property type="term" value="P:in utero embryonic development"/>
    <property type="evidence" value="ECO:0000250"/>
    <property type="project" value="UniProtKB"/>
</dbReference>
<dbReference type="GO" id="GO:0043066">
    <property type="term" value="P:negative regulation of apoptotic process"/>
    <property type="evidence" value="ECO:0007669"/>
    <property type="project" value="Ensembl"/>
</dbReference>
<dbReference type="GO" id="GO:0008284">
    <property type="term" value="P:positive regulation of cell population proliferation"/>
    <property type="evidence" value="ECO:0007669"/>
    <property type="project" value="Ensembl"/>
</dbReference>
<dbReference type="GO" id="GO:0045893">
    <property type="term" value="P:positive regulation of DNA-templated transcription"/>
    <property type="evidence" value="ECO:0000250"/>
    <property type="project" value="UniProtKB"/>
</dbReference>
<dbReference type="GO" id="GO:0045944">
    <property type="term" value="P:positive regulation of transcription by RNA polymerase II"/>
    <property type="evidence" value="ECO:0000314"/>
    <property type="project" value="UniProtKB"/>
</dbReference>
<dbReference type="GO" id="GO:0006355">
    <property type="term" value="P:regulation of DNA-templated transcription"/>
    <property type="evidence" value="ECO:0000314"/>
    <property type="project" value="MGI"/>
</dbReference>
<dbReference type="GO" id="GO:0006357">
    <property type="term" value="P:regulation of transcription by RNA polymerase II"/>
    <property type="evidence" value="ECO:0000318"/>
    <property type="project" value="GO_Central"/>
</dbReference>
<dbReference type="GO" id="GO:0032355">
    <property type="term" value="P:response to estradiol"/>
    <property type="evidence" value="ECO:0007669"/>
    <property type="project" value="Ensembl"/>
</dbReference>
<dbReference type="GO" id="GO:0001666">
    <property type="term" value="P:response to hypoxia"/>
    <property type="evidence" value="ECO:0000314"/>
    <property type="project" value="UniProtKB"/>
</dbReference>
<dbReference type="CDD" id="cd18947">
    <property type="entry name" value="bHLH-PAS_ARNT"/>
    <property type="match status" value="1"/>
</dbReference>
<dbReference type="CDD" id="cd00130">
    <property type="entry name" value="PAS"/>
    <property type="match status" value="2"/>
</dbReference>
<dbReference type="FunFam" id="3.30.450.20:FF:000003">
    <property type="entry name" value="Aryl hydrocarbon receptor nuclear translocator 2"/>
    <property type="match status" value="1"/>
</dbReference>
<dbReference type="FunFam" id="3.30.450.20:FF:000020">
    <property type="entry name" value="Aryl hydrocarbon receptor nuclear translocator 2"/>
    <property type="match status" value="1"/>
</dbReference>
<dbReference type="FunFam" id="4.10.280.10:FF:000011">
    <property type="entry name" value="Aryl hydrocarbon receptor nuclear translocator 2"/>
    <property type="match status" value="1"/>
</dbReference>
<dbReference type="Gene3D" id="4.10.280.10">
    <property type="entry name" value="Helix-loop-helix DNA-binding domain"/>
    <property type="match status" value="1"/>
</dbReference>
<dbReference type="Gene3D" id="3.30.450.20">
    <property type="entry name" value="PAS domain"/>
    <property type="match status" value="2"/>
</dbReference>
<dbReference type="InterPro" id="IPR011598">
    <property type="entry name" value="bHLH_dom"/>
</dbReference>
<dbReference type="InterPro" id="IPR050933">
    <property type="entry name" value="Circadian_TF"/>
</dbReference>
<dbReference type="InterPro" id="IPR036638">
    <property type="entry name" value="HLH_DNA-bd_sf"/>
</dbReference>
<dbReference type="InterPro" id="IPR001067">
    <property type="entry name" value="Nuc_translocat"/>
</dbReference>
<dbReference type="InterPro" id="IPR001610">
    <property type="entry name" value="PAC"/>
</dbReference>
<dbReference type="InterPro" id="IPR000014">
    <property type="entry name" value="PAS"/>
</dbReference>
<dbReference type="InterPro" id="IPR035965">
    <property type="entry name" value="PAS-like_dom_sf"/>
</dbReference>
<dbReference type="InterPro" id="IPR013767">
    <property type="entry name" value="PAS_fold"/>
</dbReference>
<dbReference type="NCBIfam" id="TIGR00229">
    <property type="entry name" value="sensory_box"/>
    <property type="match status" value="1"/>
</dbReference>
<dbReference type="PANTHER" id="PTHR23042">
    <property type="entry name" value="CIRCADIAN PROTEIN CLOCK/ARNT/BMAL/PAS"/>
    <property type="match status" value="1"/>
</dbReference>
<dbReference type="Pfam" id="PF00010">
    <property type="entry name" value="HLH"/>
    <property type="match status" value="1"/>
</dbReference>
<dbReference type="Pfam" id="PF00989">
    <property type="entry name" value="PAS"/>
    <property type="match status" value="1"/>
</dbReference>
<dbReference type="Pfam" id="PF14598">
    <property type="entry name" value="PAS_11"/>
    <property type="match status" value="1"/>
</dbReference>
<dbReference type="PRINTS" id="PR00785">
    <property type="entry name" value="NCTRNSLOCATR"/>
</dbReference>
<dbReference type="SMART" id="SM00353">
    <property type="entry name" value="HLH"/>
    <property type="match status" value="1"/>
</dbReference>
<dbReference type="SMART" id="SM00086">
    <property type="entry name" value="PAC"/>
    <property type="match status" value="1"/>
</dbReference>
<dbReference type="SMART" id="SM00091">
    <property type="entry name" value="PAS"/>
    <property type="match status" value="2"/>
</dbReference>
<dbReference type="SUPFAM" id="SSF47459">
    <property type="entry name" value="HLH, helix-loop-helix DNA-binding domain"/>
    <property type="match status" value="1"/>
</dbReference>
<dbReference type="SUPFAM" id="SSF55785">
    <property type="entry name" value="PYP-like sensor domain (PAS domain)"/>
    <property type="match status" value="2"/>
</dbReference>
<dbReference type="PROSITE" id="PS50888">
    <property type="entry name" value="BHLH"/>
    <property type="match status" value="1"/>
</dbReference>
<dbReference type="PROSITE" id="PS50112">
    <property type="entry name" value="PAS"/>
    <property type="match status" value="2"/>
</dbReference>
<organism>
    <name type="scientific">Homo sapiens</name>
    <name type="common">Human</name>
    <dbReference type="NCBI Taxonomy" id="9606"/>
    <lineage>
        <taxon>Eukaryota</taxon>
        <taxon>Metazoa</taxon>
        <taxon>Chordata</taxon>
        <taxon>Craniata</taxon>
        <taxon>Vertebrata</taxon>
        <taxon>Euteleostomi</taxon>
        <taxon>Mammalia</taxon>
        <taxon>Eutheria</taxon>
        <taxon>Euarchontoglires</taxon>
        <taxon>Primates</taxon>
        <taxon>Haplorrhini</taxon>
        <taxon>Catarrhini</taxon>
        <taxon>Hominidae</taxon>
        <taxon>Homo</taxon>
    </lineage>
</organism>
<protein>
    <recommendedName>
        <fullName>Aryl hydrocarbon receptor nuclear translocator 2</fullName>
        <shortName>ARNT protein 2</shortName>
    </recommendedName>
    <alternativeName>
        <fullName>Class E basic helix-loop-helix protein 1</fullName>
        <shortName>bHLHe1</shortName>
    </alternativeName>
</protein>
<comment type="function">
    <text evidence="5">Transcription factor that plays a role in the development of the hypothalamo-pituitary axis, postnatal brain growth, and visual and renal function (PubMed:24022475). Specifically recognizes the xenobiotic response element (XRE).</text>
</comment>
<comment type="subunit">
    <text evidence="1 6">Efficient DNA binding requires dimerization with another bHLH protein (By similarity). Heterodimer with NPAS4 (PubMed:24465693). Heterodimer with SIM1 (By similarity). Heterodimer with the aryl hydrocarbon receptor (AHR) or the SIM1 protein (By similarity). Interacts with TACC3 (By similarity).</text>
</comment>
<comment type="interaction">
    <interactant intactId="EBI-765971">
        <id>Q9HBZ2</id>
    </interactant>
    <interactant intactId="EBI-541426">
        <id>Q9BXS5</id>
        <label>AP1M1</label>
    </interactant>
    <organismsDiffer>false</organismsDiffer>
    <experiments>3</experiments>
</comment>
<comment type="interaction">
    <interactant intactId="EBI-765971">
        <id>Q9HBZ2</id>
    </interactant>
    <interactant intactId="EBI-2371151">
        <id>Q9Y2T2</id>
        <label>AP3M1</label>
    </interactant>
    <organismsDiffer>false</organismsDiffer>
    <experiments>3</experiments>
</comment>
<comment type="interaction">
    <interactant intactId="EBI-765971">
        <id>Q9HBZ2</id>
    </interactant>
    <interactant intactId="EBI-1765641">
        <id>Q9Y6W3</id>
        <label>CAPN7</label>
    </interactant>
    <organismsDiffer>false</organismsDiffer>
    <experiments>3</experiments>
</comment>
<comment type="interaction">
    <interactant intactId="EBI-765971">
        <id>Q9HBZ2</id>
    </interactant>
    <interactant intactId="EBI-740376">
        <id>Q86UW9</id>
        <label>DTX2</label>
    </interactant>
    <organismsDiffer>false</organismsDiffer>
    <experiments>4</experiments>
</comment>
<comment type="interaction">
    <interactant intactId="EBI-765971">
        <id>Q9HBZ2</id>
    </interactant>
    <interactant intactId="EBI-12013806">
        <id>Q6NZ36-4</id>
        <label>FAAP20</label>
    </interactant>
    <organismsDiffer>false</organismsDiffer>
    <experiments>3</experiments>
</comment>
<comment type="interaction">
    <interactant intactId="EBI-765971">
        <id>Q9HBZ2</id>
    </interactant>
    <interactant intactId="EBI-11959475">
        <id>P25791-3</id>
        <label>LMO2</label>
    </interactant>
    <organismsDiffer>false</organismsDiffer>
    <experiments>3</experiments>
</comment>
<comment type="interaction">
    <interactant intactId="EBI-765971">
        <id>Q9HBZ2</id>
    </interactant>
    <interactant intactId="EBI-2798728">
        <id>P61968</id>
        <label>LMO4</label>
    </interactant>
    <organismsDiffer>false</organismsDiffer>
    <experiments>3</experiments>
</comment>
<comment type="interaction">
    <interactant intactId="EBI-765971">
        <id>Q9HBZ2</id>
    </interactant>
    <interactant intactId="EBI-11322367">
        <id>Q8IXF0</id>
        <label>NPAS3</label>
    </interactant>
    <organismsDiffer>false</organismsDiffer>
    <experiments>3</experiments>
</comment>
<comment type="interaction">
    <interactant intactId="EBI-765971">
        <id>Q9HBZ2</id>
    </interactant>
    <interactant intactId="EBI-9057006">
        <id>Q9UJX0</id>
        <label>OSGIN1</label>
    </interactant>
    <organismsDiffer>false</organismsDiffer>
    <experiments>3</experiments>
</comment>
<comment type="interaction">
    <interactant intactId="EBI-765971">
        <id>Q9HBZ2</id>
    </interactant>
    <interactant intactId="EBI-372273">
        <id>P20618</id>
        <label>PSMB1</label>
    </interactant>
    <organismsDiffer>false</organismsDiffer>
    <experiments>3</experiments>
</comment>
<comment type="interaction">
    <interactant intactId="EBI-765971">
        <id>Q9HBZ2</id>
    </interactant>
    <interactant intactId="EBI-12808088">
        <id>P81133</id>
        <label>SIM1</label>
    </interactant>
    <organismsDiffer>false</organismsDiffer>
    <experiments>3</experiments>
</comment>
<comment type="interaction">
    <interactant intactId="EBI-765971">
        <id>Q9HBZ2</id>
    </interactant>
    <interactant intactId="EBI-749295">
        <id>O75716</id>
        <label>STK16</label>
    </interactant>
    <organismsDiffer>false</organismsDiffer>
    <experiments>3</experiments>
</comment>
<comment type="subcellular location">
    <subcellularLocation>
        <location evidence="3 6">Nucleus</location>
    </subcellularLocation>
</comment>
<comment type="alternative products">
    <event type="alternative splicing"/>
    <isoform>
        <id>Q9HBZ2-1</id>
        <name>1</name>
        <sequence type="displayed"/>
    </isoform>
    <isoform>
        <id>Q9HBZ2-2</id>
        <name>2</name>
        <sequence type="described" ref="VSP_022687"/>
    </isoform>
</comment>
<comment type="disease" evidence="5">
    <disease id="DI-04175">
        <name>Webb-Dattani syndrome</name>
        <acronym>WEDAS</acronym>
        <description>A disorder characterized by postnatal microcephaly with fronto-temporal lobe hypoplasia, multiple pituitary hormone deficiency, global developmental delay, seizures, severe visual impairment and abnormalities of the kidneys and urinary tract.</description>
        <dbReference type="MIM" id="615926"/>
    </disease>
    <text>The disease is caused by variants affecting the gene represented in this entry.</text>
</comment>
<comment type="sequence caution" evidence="10">
    <conflict type="miscellaneous discrepancy">
        <sequence resource="EMBL-CDS" id="AAH36099"/>
    </conflict>
    <text>Probable cloning artifact.</text>
</comment>
<comment type="sequence caution" evidence="10">
    <conflict type="erroneous initiation">
        <sequence resource="EMBL-CDS" id="BAA20766"/>
    </conflict>
    <text>Extended N-terminus.</text>
</comment>
<name>ARNT2_HUMAN</name>
<evidence type="ECO:0000250" key="1">
    <source>
        <dbReference type="UniProtKB" id="Q61324"/>
    </source>
</evidence>
<evidence type="ECO:0000255" key="2">
    <source>
        <dbReference type="PROSITE-ProRule" id="PRU00140"/>
    </source>
</evidence>
<evidence type="ECO:0000255" key="3">
    <source>
        <dbReference type="PROSITE-ProRule" id="PRU00981"/>
    </source>
</evidence>
<evidence type="ECO:0000256" key="4">
    <source>
        <dbReference type="SAM" id="MobiDB-lite"/>
    </source>
</evidence>
<evidence type="ECO:0000269" key="5">
    <source>
    </source>
</evidence>
<evidence type="ECO:0000269" key="6">
    <source>
    </source>
</evidence>
<evidence type="ECO:0000269" key="7">
    <source>
    </source>
</evidence>
<evidence type="ECO:0000303" key="8">
    <source>
    </source>
</evidence>
<evidence type="ECO:0000303" key="9">
    <source>
    </source>
</evidence>
<evidence type="ECO:0000305" key="10"/>
<proteinExistence type="evidence at protein level"/>
<gene>
    <name type="primary">ARNT2</name>
    <name type="synonym">BHLHE1</name>
    <name type="synonym">KIAA0307</name>
</gene>
<sequence length="717" mass="78691">MATPAAVNPPEMASDIPGSVTLPVAPMAATGQVRMAGAMPARGGKRRSGMDFDDEDGEGPSKFSRENHSEIERRRRNKMTQYITELSDMVPTCSALARKPDKLTILRMAVSHMKSMRGTGNKSTDGAYKPSFLTEQELKHLILEAADGFLFVVAAETGRVIYVSDSVTPVLNQPQSEWFGSTLYEQVHPDDVEKLREQLCTSENSMTGRILDLKTGTVKKEGQQSSMRMCMGSRRSFICRMRCGNAPLDHLPLNRITTMRKRFRNGLGPVKEGEAQYAVVHCTGYIKAWPPAGMTIPEEDADVGQGSKYCLVAIGRLQVTSSPVCMDMNGMSVPTEFLSRHNSDGIITFVDPRCISVIGYQPQDLLGKDILEFCHPEDQSHLRESFQQVVKLKGQVLSVMYRFRTKNREWMLIRTSSFTFQNPYSDEIEYIICTNTNVKQLQQQQAELEVHQRDGLSSYDLSQVPVPNLPAGVHEAGKSVEKADAIFSQERDPRFAEMFAGISASEKKMMSSASAAGTQQIYSQGSPFPSGHSGKAFSSSVVHVPGVNDIQSSSSTGQNMSQISRQLNQSQVAWTGSRPPFPGQQIPSQSSKTQSSPFGIGTSHTYPADPSSYSPLSSPATSSPSGNAYSSLANRTPGFAESGQSSGQFQGRPSEVWSQWQSQHHGQQSGEQHSHQQPGQTEVFQDMLPMPGDPTQGTGNYNIEDFADLGMFPPFSE</sequence>